<dbReference type="EMBL" id="CP001111">
    <property type="protein sequence ID" value="ACF51182.1"/>
    <property type="molecule type" value="Genomic_DNA"/>
</dbReference>
<dbReference type="RefSeq" id="WP_012510667.1">
    <property type="nucleotide sequence ID" value="NC_011071.1"/>
</dbReference>
<dbReference type="SMR" id="B4SRB1"/>
<dbReference type="STRING" id="391008.Smal_1477"/>
<dbReference type="KEGG" id="smt:Smal_1477"/>
<dbReference type="eggNOG" id="COG2137">
    <property type="taxonomic scope" value="Bacteria"/>
</dbReference>
<dbReference type="HOGENOM" id="CLU_066607_3_2_6"/>
<dbReference type="OrthoDB" id="7066780at2"/>
<dbReference type="Proteomes" id="UP000001867">
    <property type="component" value="Chromosome"/>
</dbReference>
<dbReference type="GO" id="GO:0005737">
    <property type="term" value="C:cytoplasm"/>
    <property type="evidence" value="ECO:0007669"/>
    <property type="project" value="UniProtKB-SubCell"/>
</dbReference>
<dbReference type="GO" id="GO:0006282">
    <property type="term" value="P:regulation of DNA repair"/>
    <property type="evidence" value="ECO:0007669"/>
    <property type="project" value="UniProtKB-UniRule"/>
</dbReference>
<dbReference type="Gene3D" id="1.10.10.10">
    <property type="entry name" value="Winged helix-like DNA-binding domain superfamily/Winged helix DNA-binding domain"/>
    <property type="match status" value="3"/>
</dbReference>
<dbReference type="HAMAP" id="MF_01114">
    <property type="entry name" value="RecX"/>
    <property type="match status" value="1"/>
</dbReference>
<dbReference type="InterPro" id="IPR053926">
    <property type="entry name" value="RecX_HTH_1st"/>
</dbReference>
<dbReference type="InterPro" id="IPR053924">
    <property type="entry name" value="RecX_HTH_2nd"/>
</dbReference>
<dbReference type="InterPro" id="IPR053925">
    <property type="entry name" value="RecX_HTH_3rd"/>
</dbReference>
<dbReference type="InterPro" id="IPR003783">
    <property type="entry name" value="Regulatory_RecX"/>
</dbReference>
<dbReference type="InterPro" id="IPR036388">
    <property type="entry name" value="WH-like_DNA-bd_sf"/>
</dbReference>
<dbReference type="NCBIfam" id="NF001054">
    <property type="entry name" value="PRK00117.2-1"/>
    <property type="match status" value="1"/>
</dbReference>
<dbReference type="PANTHER" id="PTHR33602">
    <property type="entry name" value="REGULATORY PROTEIN RECX FAMILY PROTEIN"/>
    <property type="match status" value="1"/>
</dbReference>
<dbReference type="PANTHER" id="PTHR33602:SF1">
    <property type="entry name" value="REGULATORY PROTEIN RECX FAMILY PROTEIN"/>
    <property type="match status" value="1"/>
</dbReference>
<dbReference type="Pfam" id="PF21982">
    <property type="entry name" value="RecX_HTH1"/>
    <property type="match status" value="1"/>
</dbReference>
<dbReference type="Pfam" id="PF02631">
    <property type="entry name" value="RecX_HTH2"/>
    <property type="match status" value="1"/>
</dbReference>
<dbReference type="Pfam" id="PF21981">
    <property type="entry name" value="RecX_HTH3"/>
    <property type="match status" value="1"/>
</dbReference>
<feature type="chain" id="PRO_1000137196" description="Regulatory protein RecX">
    <location>
        <begin position="1"/>
        <end position="163"/>
    </location>
</feature>
<feature type="region of interest" description="Disordered" evidence="2">
    <location>
        <begin position="1"/>
        <end position="21"/>
    </location>
</feature>
<organism>
    <name type="scientific">Stenotrophomonas maltophilia (strain R551-3)</name>
    <dbReference type="NCBI Taxonomy" id="391008"/>
    <lineage>
        <taxon>Bacteria</taxon>
        <taxon>Pseudomonadati</taxon>
        <taxon>Pseudomonadota</taxon>
        <taxon>Gammaproteobacteria</taxon>
        <taxon>Lysobacterales</taxon>
        <taxon>Lysobacteraceae</taxon>
        <taxon>Stenotrophomonas</taxon>
        <taxon>Stenotrophomonas maltophilia group</taxon>
    </lineage>
</organism>
<evidence type="ECO:0000255" key="1">
    <source>
        <dbReference type="HAMAP-Rule" id="MF_01114"/>
    </source>
</evidence>
<evidence type="ECO:0000256" key="2">
    <source>
        <dbReference type="SAM" id="MobiDB-lite"/>
    </source>
</evidence>
<proteinExistence type="inferred from homology"/>
<reference key="1">
    <citation type="submission" date="2008-06" db="EMBL/GenBank/DDBJ databases">
        <title>Complete sequence of Stenotrophomonas maltophilia R551-3.</title>
        <authorList>
            <consortium name="US DOE Joint Genome Institute"/>
            <person name="Lucas S."/>
            <person name="Copeland A."/>
            <person name="Lapidus A."/>
            <person name="Glavina del Rio T."/>
            <person name="Dalin E."/>
            <person name="Tice H."/>
            <person name="Pitluck S."/>
            <person name="Chain P."/>
            <person name="Malfatti S."/>
            <person name="Shin M."/>
            <person name="Vergez L."/>
            <person name="Lang D."/>
            <person name="Schmutz J."/>
            <person name="Larimer F."/>
            <person name="Land M."/>
            <person name="Hauser L."/>
            <person name="Kyrpides N."/>
            <person name="Mikhailova N."/>
            <person name="Taghavi S."/>
            <person name="Monchy S."/>
            <person name="Newman L."/>
            <person name="Vangronsveld J."/>
            <person name="van der Lelie D."/>
            <person name="Richardson P."/>
        </authorList>
    </citation>
    <scope>NUCLEOTIDE SEQUENCE [LARGE SCALE GENOMIC DNA]</scope>
    <source>
        <strain>R551-3</strain>
    </source>
</reference>
<name>RECX_STRM5</name>
<protein>
    <recommendedName>
        <fullName evidence="1">Regulatory protein RecX</fullName>
    </recommendedName>
</protein>
<keyword id="KW-0963">Cytoplasm</keyword>
<comment type="function">
    <text evidence="1">Modulates RecA activity.</text>
</comment>
<comment type="subcellular location">
    <subcellularLocation>
        <location evidence="1">Cytoplasm</location>
    </subcellularLocation>
</comment>
<comment type="similarity">
    <text evidence="1">Belongs to the RecX family.</text>
</comment>
<sequence length="163" mass="18367">MSDAEDIPTGRKRRPREQTPVQRALGLLVRREHSRKELTRKLTARGIEDEAAQAAVAKLTEAGWQDDARFAENLVRMRANTGYGPIHVRAELGTHGLDSEAIAAAMDSYEGDWQENARDLVRRRFGETGPQDLAQRRKAADLLARRGFDGDSIRRATRYDPDD</sequence>
<gene>
    <name evidence="1" type="primary">recX</name>
    <name type="ordered locus">Smal_1477</name>
</gene>
<accession>B4SRB1</accession>